<proteinExistence type="inferred from homology"/>
<name>MIAB_NITEU</name>
<reference key="1">
    <citation type="journal article" date="2003" name="J. Bacteriol.">
        <title>Complete genome sequence of the ammonia-oxidizing bacterium and obligate chemolithoautotroph Nitrosomonas europaea.</title>
        <authorList>
            <person name="Chain P."/>
            <person name="Lamerdin J.E."/>
            <person name="Larimer F.W."/>
            <person name="Regala W."/>
            <person name="Lao V."/>
            <person name="Land M.L."/>
            <person name="Hauser L."/>
            <person name="Hooper A.B."/>
            <person name="Klotz M.G."/>
            <person name="Norton J."/>
            <person name="Sayavedra-Soto L.A."/>
            <person name="Arciero D.M."/>
            <person name="Hommes N.G."/>
            <person name="Whittaker M.M."/>
            <person name="Arp D.J."/>
        </authorList>
    </citation>
    <scope>NUCLEOTIDE SEQUENCE [LARGE SCALE GENOMIC DNA]</scope>
    <source>
        <strain>ATCC 19718 / CIP 103999 / KCTC 2705 / NBRC 14298</strain>
    </source>
</reference>
<organism>
    <name type="scientific">Nitrosomonas europaea (strain ATCC 19718 / CIP 103999 / KCTC 2705 / NBRC 14298)</name>
    <dbReference type="NCBI Taxonomy" id="228410"/>
    <lineage>
        <taxon>Bacteria</taxon>
        <taxon>Pseudomonadati</taxon>
        <taxon>Pseudomonadota</taxon>
        <taxon>Betaproteobacteria</taxon>
        <taxon>Nitrosomonadales</taxon>
        <taxon>Nitrosomonadaceae</taxon>
        <taxon>Nitrosomonas</taxon>
    </lineage>
</organism>
<dbReference type="EC" id="2.8.4.3" evidence="1"/>
<dbReference type="EMBL" id="AL954747">
    <property type="protein sequence ID" value="CAD86247.1"/>
    <property type="molecule type" value="Genomic_DNA"/>
</dbReference>
<dbReference type="RefSeq" id="WP_011112819.1">
    <property type="nucleotide sequence ID" value="NC_004757.1"/>
</dbReference>
<dbReference type="SMR" id="Q82SI7"/>
<dbReference type="STRING" id="228410.NE2335"/>
<dbReference type="GeneID" id="87105466"/>
<dbReference type="KEGG" id="neu:NE2335"/>
<dbReference type="eggNOG" id="COG0621">
    <property type="taxonomic scope" value="Bacteria"/>
</dbReference>
<dbReference type="HOGENOM" id="CLU_018697_2_0_4"/>
<dbReference type="OrthoDB" id="9805215at2"/>
<dbReference type="PhylomeDB" id="Q82SI7"/>
<dbReference type="Proteomes" id="UP000001416">
    <property type="component" value="Chromosome"/>
</dbReference>
<dbReference type="GO" id="GO:0005829">
    <property type="term" value="C:cytosol"/>
    <property type="evidence" value="ECO:0007669"/>
    <property type="project" value="TreeGrafter"/>
</dbReference>
<dbReference type="GO" id="GO:0051539">
    <property type="term" value="F:4 iron, 4 sulfur cluster binding"/>
    <property type="evidence" value="ECO:0007669"/>
    <property type="project" value="UniProtKB-UniRule"/>
</dbReference>
<dbReference type="GO" id="GO:0046872">
    <property type="term" value="F:metal ion binding"/>
    <property type="evidence" value="ECO:0007669"/>
    <property type="project" value="UniProtKB-KW"/>
</dbReference>
<dbReference type="GO" id="GO:0035597">
    <property type="term" value="F:N6-isopentenyladenosine methylthiotransferase activity"/>
    <property type="evidence" value="ECO:0007669"/>
    <property type="project" value="TreeGrafter"/>
</dbReference>
<dbReference type="CDD" id="cd01335">
    <property type="entry name" value="Radical_SAM"/>
    <property type="match status" value="1"/>
</dbReference>
<dbReference type="FunFam" id="3.40.50.12160:FF:000001">
    <property type="entry name" value="tRNA-2-methylthio-N(6)-dimethylallyladenosine synthase"/>
    <property type="match status" value="1"/>
</dbReference>
<dbReference type="FunFam" id="3.80.30.20:FF:000001">
    <property type="entry name" value="tRNA-2-methylthio-N(6)-dimethylallyladenosine synthase 2"/>
    <property type="match status" value="1"/>
</dbReference>
<dbReference type="Gene3D" id="3.40.50.12160">
    <property type="entry name" value="Methylthiotransferase, N-terminal domain"/>
    <property type="match status" value="1"/>
</dbReference>
<dbReference type="Gene3D" id="3.80.30.20">
    <property type="entry name" value="tm_1862 like domain"/>
    <property type="match status" value="1"/>
</dbReference>
<dbReference type="HAMAP" id="MF_01864">
    <property type="entry name" value="tRNA_metthiotr_MiaB"/>
    <property type="match status" value="1"/>
</dbReference>
<dbReference type="InterPro" id="IPR006638">
    <property type="entry name" value="Elp3/MiaA/NifB-like_rSAM"/>
</dbReference>
<dbReference type="InterPro" id="IPR005839">
    <property type="entry name" value="Methylthiotransferase"/>
</dbReference>
<dbReference type="InterPro" id="IPR020612">
    <property type="entry name" value="Methylthiotransferase_CS"/>
</dbReference>
<dbReference type="InterPro" id="IPR013848">
    <property type="entry name" value="Methylthiotransferase_N"/>
</dbReference>
<dbReference type="InterPro" id="IPR038135">
    <property type="entry name" value="Methylthiotransferase_N_sf"/>
</dbReference>
<dbReference type="InterPro" id="IPR006463">
    <property type="entry name" value="MiaB_methiolase"/>
</dbReference>
<dbReference type="InterPro" id="IPR007197">
    <property type="entry name" value="rSAM"/>
</dbReference>
<dbReference type="InterPro" id="IPR023404">
    <property type="entry name" value="rSAM_horseshoe"/>
</dbReference>
<dbReference type="InterPro" id="IPR002792">
    <property type="entry name" value="TRAM_dom"/>
</dbReference>
<dbReference type="NCBIfam" id="TIGR01574">
    <property type="entry name" value="miaB-methiolase"/>
    <property type="match status" value="1"/>
</dbReference>
<dbReference type="NCBIfam" id="TIGR00089">
    <property type="entry name" value="MiaB/RimO family radical SAM methylthiotransferase"/>
    <property type="match status" value="1"/>
</dbReference>
<dbReference type="PANTHER" id="PTHR43020">
    <property type="entry name" value="CDK5 REGULATORY SUBUNIT-ASSOCIATED PROTEIN 1"/>
    <property type="match status" value="1"/>
</dbReference>
<dbReference type="PANTHER" id="PTHR43020:SF2">
    <property type="entry name" value="MITOCHONDRIAL TRNA METHYLTHIOTRANSFERASE CDK5RAP1"/>
    <property type="match status" value="1"/>
</dbReference>
<dbReference type="Pfam" id="PF04055">
    <property type="entry name" value="Radical_SAM"/>
    <property type="match status" value="1"/>
</dbReference>
<dbReference type="Pfam" id="PF01938">
    <property type="entry name" value="TRAM"/>
    <property type="match status" value="1"/>
</dbReference>
<dbReference type="Pfam" id="PF00919">
    <property type="entry name" value="UPF0004"/>
    <property type="match status" value="1"/>
</dbReference>
<dbReference type="SFLD" id="SFLDF00273">
    <property type="entry name" value="(dimethylallyl)adenosine_tRNA"/>
    <property type="match status" value="1"/>
</dbReference>
<dbReference type="SFLD" id="SFLDG01082">
    <property type="entry name" value="B12-binding_domain_containing"/>
    <property type="match status" value="1"/>
</dbReference>
<dbReference type="SFLD" id="SFLDG01061">
    <property type="entry name" value="methylthiotransferase"/>
    <property type="match status" value="1"/>
</dbReference>
<dbReference type="SMART" id="SM00729">
    <property type="entry name" value="Elp3"/>
    <property type="match status" value="1"/>
</dbReference>
<dbReference type="SUPFAM" id="SSF102114">
    <property type="entry name" value="Radical SAM enzymes"/>
    <property type="match status" value="1"/>
</dbReference>
<dbReference type="PROSITE" id="PS51449">
    <property type="entry name" value="MTTASE_N"/>
    <property type="match status" value="1"/>
</dbReference>
<dbReference type="PROSITE" id="PS01278">
    <property type="entry name" value="MTTASE_RADICAL"/>
    <property type="match status" value="1"/>
</dbReference>
<dbReference type="PROSITE" id="PS51918">
    <property type="entry name" value="RADICAL_SAM"/>
    <property type="match status" value="1"/>
</dbReference>
<dbReference type="PROSITE" id="PS50926">
    <property type="entry name" value="TRAM"/>
    <property type="match status" value="1"/>
</dbReference>
<gene>
    <name evidence="1" type="primary">miaB</name>
    <name type="ordered locus">NE2335</name>
</gene>
<keyword id="KW-0004">4Fe-4S</keyword>
<keyword id="KW-0963">Cytoplasm</keyword>
<keyword id="KW-0408">Iron</keyword>
<keyword id="KW-0411">Iron-sulfur</keyword>
<keyword id="KW-0479">Metal-binding</keyword>
<keyword id="KW-1185">Reference proteome</keyword>
<keyword id="KW-0949">S-adenosyl-L-methionine</keyword>
<keyword id="KW-0808">Transferase</keyword>
<keyword id="KW-0819">tRNA processing</keyword>
<protein>
    <recommendedName>
        <fullName evidence="1">tRNA-2-methylthio-N(6)-dimethylallyladenosine synthase</fullName>
        <ecNumber evidence="1">2.8.4.3</ecNumber>
    </recommendedName>
    <alternativeName>
        <fullName evidence="1">(Dimethylallyl)adenosine tRNA methylthiotransferase MiaB</fullName>
    </alternativeName>
    <alternativeName>
        <fullName evidence="1">tRNA-i(6)A37 methylthiotransferase</fullName>
    </alternativeName>
</protein>
<evidence type="ECO:0000255" key="1">
    <source>
        <dbReference type="HAMAP-Rule" id="MF_01864"/>
    </source>
</evidence>
<evidence type="ECO:0000255" key="2">
    <source>
        <dbReference type="PROSITE-ProRule" id="PRU01266"/>
    </source>
</evidence>
<comment type="function">
    <text evidence="1">Catalyzes the methylthiolation of N6-(dimethylallyl)adenosine (i(6)A), leading to the formation of 2-methylthio-N6-(dimethylallyl)adenosine (ms(2)i(6)A) at position 37 in tRNAs that read codons beginning with uridine.</text>
</comment>
<comment type="catalytic activity">
    <reaction evidence="1">
        <text>N(6)-dimethylallyladenosine(37) in tRNA + (sulfur carrier)-SH + AH2 + 2 S-adenosyl-L-methionine = 2-methylsulfanyl-N(6)-dimethylallyladenosine(37) in tRNA + (sulfur carrier)-H + 5'-deoxyadenosine + L-methionine + A + S-adenosyl-L-homocysteine + 2 H(+)</text>
        <dbReference type="Rhea" id="RHEA:37067"/>
        <dbReference type="Rhea" id="RHEA-COMP:10375"/>
        <dbReference type="Rhea" id="RHEA-COMP:10376"/>
        <dbReference type="Rhea" id="RHEA-COMP:14737"/>
        <dbReference type="Rhea" id="RHEA-COMP:14739"/>
        <dbReference type="ChEBI" id="CHEBI:13193"/>
        <dbReference type="ChEBI" id="CHEBI:15378"/>
        <dbReference type="ChEBI" id="CHEBI:17319"/>
        <dbReference type="ChEBI" id="CHEBI:17499"/>
        <dbReference type="ChEBI" id="CHEBI:29917"/>
        <dbReference type="ChEBI" id="CHEBI:57844"/>
        <dbReference type="ChEBI" id="CHEBI:57856"/>
        <dbReference type="ChEBI" id="CHEBI:59789"/>
        <dbReference type="ChEBI" id="CHEBI:64428"/>
        <dbReference type="ChEBI" id="CHEBI:74415"/>
        <dbReference type="ChEBI" id="CHEBI:74417"/>
        <dbReference type="EC" id="2.8.4.3"/>
    </reaction>
</comment>
<comment type="cofactor">
    <cofactor evidence="1">
        <name>[4Fe-4S] cluster</name>
        <dbReference type="ChEBI" id="CHEBI:49883"/>
    </cofactor>
    <text evidence="1">Binds 2 [4Fe-4S] clusters. One cluster is coordinated with 3 cysteines and an exchangeable S-adenosyl-L-methionine.</text>
</comment>
<comment type="subunit">
    <text evidence="1">Monomer.</text>
</comment>
<comment type="subcellular location">
    <subcellularLocation>
        <location evidence="1">Cytoplasm</location>
    </subcellularLocation>
</comment>
<comment type="similarity">
    <text evidence="1">Belongs to the methylthiotransferase family. MiaB subfamily.</text>
</comment>
<accession>Q82SI7</accession>
<sequence>MGSKLYIRTFGCQMNEYDSAKMADILLSEKGMELAETPEEADLILFNTCSVREKAQEKVFHDLGRVRHLKNSKPDLLIGVGGCVASQEGPEIVKRAPFVDLVFGPQTLHRLPDLIDARRRTGRPQVDISFPEIEKFDRLPPARTEGSTAFVSIMEGCSKYCSFCVVPYTRGEEVSRPLDDVLTEVAGLAIQGVKEVTLLGQNVNAYLGKMINGEIADFATLLDYIHEIPGIERIRYTTSHPREFTARLIEAYQRLPKLVGHVHLPVQSGSDRILAAMKRGYTTVEYKSIVRKLRLVRPDISISSDFIIGFPGETEDDFEATMKLIDDVHFDESFSFIYSPRPGTPAADLPDNTSHQIKLTRLYRLQEKIQLNAQAISQGMVDTVQRILVEGPSRKDPGEFCGRTDNNRVVNFAGHAGLTGSFIDIRITAVSSHTLRGEISDMQ</sequence>
<feature type="chain" id="PRO_0000374411" description="tRNA-2-methylthio-N(6)-dimethylallyladenosine synthase">
    <location>
        <begin position="1"/>
        <end position="443"/>
    </location>
</feature>
<feature type="domain" description="MTTase N-terminal" evidence="1">
    <location>
        <begin position="3"/>
        <end position="120"/>
    </location>
</feature>
<feature type="domain" description="Radical SAM core" evidence="2">
    <location>
        <begin position="143"/>
        <end position="375"/>
    </location>
</feature>
<feature type="domain" description="TRAM" evidence="1">
    <location>
        <begin position="378"/>
        <end position="441"/>
    </location>
</feature>
<feature type="binding site" evidence="1">
    <location>
        <position position="12"/>
    </location>
    <ligand>
        <name>[4Fe-4S] cluster</name>
        <dbReference type="ChEBI" id="CHEBI:49883"/>
        <label>1</label>
    </ligand>
</feature>
<feature type="binding site" evidence="1">
    <location>
        <position position="49"/>
    </location>
    <ligand>
        <name>[4Fe-4S] cluster</name>
        <dbReference type="ChEBI" id="CHEBI:49883"/>
        <label>1</label>
    </ligand>
</feature>
<feature type="binding site" evidence="1">
    <location>
        <position position="83"/>
    </location>
    <ligand>
        <name>[4Fe-4S] cluster</name>
        <dbReference type="ChEBI" id="CHEBI:49883"/>
        <label>1</label>
    </ligand>
</feature>
<feature type="binding site" evidence="1">
    <location>
        <position position="157"/>
    </location>
    <ligand>
        <name>[4Fe-4S] cluster</name>
        <dbReference type="ChEBI" id="CHEBI:49883"/>
        <label>2</label>
        <note>4Fe-4S-S-AdoMet</note>
    </ligand>
</feature>
<feature type="binding site" evidence="1">
    <location>
        <position position="161"/>
    </location>
    <ligand>
        <name>[4Fe-4S] cluster</name>
        <dbReference type="ChEBI" id="CHEBI:49883"/>
        <label>2</label>
        <note>4Fe-4S-S-AdoMet</note>
    </ligand>
</feature>
<feature type="binding site" evidence="1">
    <location>
        <position position="164"/>
    </location>
    <ligand>
        <name>[4Fe-4S] cluster</name>
        <dbReference type="ChEBI" id="CHEBI:49883"/>
        <label>2</label>
        <note>4Fe-4S-S-AdoMet</note>
    </ligand>
</feature>